<protein>
    <recommendedName>
        <fullName evidence="5">Cucurbitadienol synthase</fullName>
        <shortName evidence="6">SgCDS</shortName>
        <shortName evidence="8">SgCS</shortName>
        <shortName evidence="5">SgCbQ</shortName>
        <ecNumber evidence="1 2 3">5.4.99.33</ecNumber>
    </recommendedName>
    <alternativeName>
        <fullName evidence="9">24,25-epoxy-cucurbitadienol synthase</fullName>
        <ecNumber evidence="2">5.4.99.-</ecNumber>
    </alternativeName>
</protein>
<dbReference type="EC" id="5.4.99.33" evidence="1 2 3"/>
<dbReference type="EC" id="5.4.99.-" evidence="2"/>
<dbReference type="EMBL" id="HQ128567">
    <property type="protein sequence ID" value="AEM42982.1"/>
    <property type="molecule type" value="mRNA"/>
</dbReference>
<dbReference type="EMBL" id="MF596154">
    <property type="protein sequence ID" value="AUC64917.1"/>
    <property type="molecule type" value="mRNA"/>
</dbReference>
<dbReference type="SMR" id="K7NBZ9"/>
<dbReference type="BRENDA" id="5.4.99.33">
    <property type="organism ID" value="3400"/>
</dbReference>
<dbReference type="UniPathway" id="UPA00213"/>
<dbReference type="GO" id="GO:0005811">
    <property type="term" value="C:lipid droplet"/>
    <property type="evidence" value="ECO:0007669"/>
    <property type="project" value="InterPro"/>
</dbReference>
<dbReference type="GO" id="GO:0034076">
    <property type="term" value="F:cucurbitadienol synthase activity"/>
    <property type="evidence" value="ECO:0000314"/>
    <property type="project" value="UniProtKB"/>
</dbReference>
<dbReference type="GO" id="GO:0016104">
    <property type="term" value="P:triterpenoid biosynthetic process"/>
    <property type="evidence" value="ECO:0007669"/>
    <property type="project" value="InterPro"/>
</dbReference>
<dbReference type="CDD" id="cd02892">
    <property type="entry name" value="SQCY_1"/>
    <property type="match status" value="1"/>
</dbReference>
<dbReference type="FunFam" id="1.50.10.20:FF:000002">
    <property type="entry name" value="Terpene cyclase/mutase family member"/>
    <property type="match status" value="1"/>
</dbReference>
<dbReference type="FunFam" id="1.50.10.20:FF:000022">
    <property type="entry name" value="Terpene cyclase/mutase family member"/>
    <property type="match status" value="1"/>
</dbReference>
<dbReference type="Gene3D" id="1.50.10.20">
    <property type="match status" value="2"/>
</dbReference>
<dbReference type="InterPro" id="IPR032696">
    <property type="entry name" value="SQ_cyclase_C"/>
</dbReference>
<dbReference type="InterPro" id="IPR032697">
    <property type="entry name" value="SQ_cyclase_N"/>
</dbReference>
<dbReference type="InterPro" id="IPR018333">
    <property type="entry name" value="Squalene_cyclase"/>
</dbReference>
<dbReference type="InterPro" id="IPR002365">
    <property type="entry name" value="Terpene_synthase_CS"/>
</dbReference>
<dbReference type="InterPro" id="IPR008930">
    <property type="entry name" value="Terpenoid_cyclase/PrenylTrfase"/>
</dbReference>
<dbReference type="NCBIfam" id="TIGR01787">
    <property type="entry name" value="squalene_cyclas"/>
    <property type="match status" value="1"/>
</dbReference>
<dbReference type="PANTHER" id="PTHR11764">
    <property type="entry name" value="TERPENE CYCLASE/MUTASE FAMILY MEMBER"/>
    <property type="match status" value="1"/>
</dbReference>
<dbReference type="PANTHER" id="PTHR11764:SF85">
    <property type="entry name" value="TERPENE CYCLASE_MUTASE FAMILY MEMBER"/>
    <property type="match status" value="1"/>
</dbReference>
<dbReference type="Pfam" id="PF13243">
    <property type="entry name" value="SQHop_cyclase_C"/>
    <property type="match status" value="1"/>
</dbReference>
<dbReference type="Pfam" id="PF13249">
    <property type="entry name" value="SQHop_cyclase_N"/>
    <property type="match status" value="1"/>
</dbReference>
<dbReference type="SFLD" id="SFLDG01016">
    <property type="entry name" value="Prenyltransferase_Like_2"/>
    <property type="match status" value="1"/>
</dbReference>
<dbReference type="SUPFAM" id="SSF48239">
    <property type="entry name" value="Terpenoid cyclases/Protein prenyltransferases"/>
    <property type="match status" value="2"/>
</dbReference>
<dbReference type="PROSITE" id="PS01074">
    <property type="entry name" value="TERPENE_SYNTHASES"/>
    <property type="match status" value="1"/>
</dbReference>
<keyword id="KW-0413">Isomerase</keyword>
<keyword id="KW-0677">Repeat</keyword>
<gene>
    <name evidence="5" type="primary">CBQ</name>
    <name evidence="7" type="synonym">CBS</name>
    <name evidence="6" type="synonym">CDS</name>
</gene>
<comment type="function">
    <text evidence="1 2 3">Oxidosqualene cyclase involved in the biosynthesis of the highly oxygenated tetracyclic triterpenes mogrosides and cucurbitacins (PubMed:25759326, PubMed:27821754, PubMed:29192442). Cucurbitacins have cytotoxic properties and exhibit deterrent taste as a defense barrier against herbivores (PubMed:25759326, PubMed:27821754). Mogrosides are nonsugar highly oxygenated compounds used as high-intensity zero-calorie sweeteners; they also possess pharmacological properties such as regulating immunity, lowering blood sugar and lipid levels, protecting the liver, and acting as antioxidants and antitumor agents (PubMed:25759326, PubMed:27821754). Converts oxidosqualene to cucurbitadienol (PubMed:25759326, PubMed:27821754, PubMed:29192442). Also mediates the conversion of 2,3;22,23-diepoxysqualene to 24,25-epoxycucurbitadienol (PubMed:27821754).</text>
</comment>
<comment type="catalytic activity">
    <reaction evidence="1 2 3">
        <text>(S)-2,3-epoxysqualene = cucurbitadienol</text>
        <dbReference type="Rhea" id="RHEA:30999"/>
        <dbReference type="ChEBI" id="CHEBI:15441"/>
        <dbReference type="ChEBI" id="CHEBI:62456"/>
        <dbReference type="EC" id="5.4.99.33"/>
    </reaction>
    <physiologicalReaction direction="left-to-right" evidence="1 2 3">
        <dbReference type="Rhea" id="RHEA:31000"/>
    </physiologicalReaction>
</comment>
<comment type="catalytic activity">
    <reaction evidence="2">
        <text>(3S,22S)-2,3:22,23-diepoxysqualene = (24S)-24,25-epoxycucurbitadienol</text>
        <dbReference type="Rhea" id="RHEA:81851"/>
        <dbReference type="ChEBI" id="CHEBI:138307"/>
        <dbReference type="ChEBI" id="CHEBI:229949"/>
    </reaction>
    <physiologicalReaction direction="left-to-right" evidence="2">
        <dbReference type="Rhea" id="RHEA:81852"/>
    </physiologicalReaction>
</comment>
<comment type="pathway">
    <text evidence="2">Secondary metabolite biosynthesis; terpenoid biosynthesis.</text>
</comment>
<comment type="tissue specificity">
    <text evidence="2">Highly expressed in young fruits 15 days after anthesis (15-DAA) (PubMed:27821754). Also observed in roots (PubMed:27821754).</text>
</comment>
<comment type="biotechnology">
    <text evidence="4">C.sativus and L.esculentum expressing S.grosvenorii genes SgSQE1, SgCS, SgEPH2, SgP450, SgUGT269-1 and SgUGT289-3 accumulate siamenoside I and mogrosides III and V, thus providing a strategy for vegetable flavor improvement or for heterologous biosynthesis of mogrosides.</text>
</comment>
<comment type="miscellaneous">
    <text evidence="10">Cucurbitadienol has anti-inflammation, anti-cancer activities, and acts as a precursor of traditional Chinese medicine active ingredients mogroside and cucurbitacin.</text>
</comment>
<comment type="similarity">
    <text evidence="9">Belongs to the terpene cyclase/mutase family.</text>
</comment>
<organism>
    <name type="scientific">Siraitia grosvenorii</name>
    <name type="common">Monk's fruit</name>
    <name type="synonym">Luo han guo</name>
    <dbReference type="NCBI Taxonomy" id="190515"/>
    <lineage>
        <taxon>Eukaryota</taxon>
        <taxon>Viridiplantae</taxon>
        <taxon>Streptophyta</taxon>
        <taxon>Embryophyta</taxon>
        <taxon>Tracheophyta</taxon>
        <taxon>Spermatophyta</taxon>
        <taxon>Magnoliopsida</taxon>
        <taxon>eudicotyledons</taxon>
        <taxon>Gunneridae</taxon>
        <taxon>Pentapetalae</taxon>
        <taxon>rosids</taxon>
        <taxon>fabids</taxon>
        <taxon>Cucurbitales</taxon>
        <taxon>Cucurbitaceae</taxon>
        <taxon>Siraitieae</taxon>
        <taxon>Siraitia</taxon>
    </lineage>
</organism>
<feature type="chain" id="PRO_0000451486" description="Cucurbitadienol synthase">
    <location>
        <begin position="1"/>
        <end position="759"/>
    </location>
</feature>
<reference key="1">
    <citation type="submission" date="2010-08" db="EMBL/GenBank/DDBJ databases">
        <title>Cloning of genes related to mogrosides biosynthesis in Siraitia grosvenorii.</title>
        <authorList>
            <person name="Tang Q."/>
            <person name="Ma X.J."/>
            <person name="Zhao H."/>
            <person name="Mo C.M."/>
        </authorList>
    </citation>
    <scope>NUCLEOTIDE SEQUENCE [MRNA]</scope>
</reference>
<reference key="2">
    <citation type="journal article" date="2017" name="Zhongguo Zhong Yao Za Zhi">
        <title>Study of heterologous efficient synthesis of cucurbitadienol.</title>
        <authorList>
            <person name="Li S.L."/>
            <person name="Wang D."/>
            <person name="Liu Y."/>
            <person name="Lin T.T."/>
            <person name="Tang J.L."/>
            <person name="Hua E.B."/>
            <person name="Zhang X.L."/>
            <person name="Dai Z.B."/>
            <person name="Huang L.Q."/>
        </authorList>
    </citation>
    <scope>NUCLEOTIDE SEQUENCE [MRNA]</scope>
    <scope>FUNCTION</scope>
    <scope>CATALYTIC ACTIVITY</scope>
</reference>
<reference key="3">
    <citation type="journal article" date="2016" name="Proc. Natl. Acad. Sci. U.S.A.">
        <title>The biosynthetic pathway of the nonsugar, high-intensity sweetener mogroside V from Siraitia grosvenorii.</title>
        <authorList>
            <person name="Itkin M."/>
            <person name="Davidovich-Rikanati R."/>
            <person name="Cohen S."/>
            <person name="Portnoy V."/>
            <person name="Doron-Faigenboim A."/>
            <person name="Oren E."/>
            <person name="Freilich S."/>
            <person name="Tzuri G."/>
            <person name="Baranes N."/>
            <person name="Shen S."/>
            <person name="Petreikov M."/>
            <person name="Sertchook R."/>
            <person name="Ben-Dor S."/>
            <person name="Gottlieb H."/>
            <person name="Hernandez A."/>
            <person name="Nelson D.R."/>
            <person name="Paris H.S."/>
            <person name="Tadmor Y."/>
            <person name="Burger Y."/>
            <person name="Lewinsohn E."/>
            <person name="Katzir N."/>
            <person name="Schaffer A."/>
        </authorList>
    </citation>
    <scope>NUCLEOTIDE SEQUENCE</scope>
    <scope>FUNCTION</scope>
    <scope>CATALYTIC ACTIVITY</scope>
    <scope>PATHWAY</scope>
    <scope>TISSUE SPECIFICITY</scope>
    <scope>GENE FAMILY</scope>
    <scope>NOMENCLATURE</scope>
</reference>
<reference key="4">
    <citation type="journal article" date="2015" name="Plant Cell Physiol.">
        <title>Functional characterization of cucurbitadienol synthase and triterpene glycosyltransferase involved in biosynthesis of mogrosides from Siraitia grosvenorii.</title>
        <authorList>
            <person name="Dai L."/>
            <person name="Liu C."/>
            <person name="Zhu Y."/>
            <person name="Zhang J."/>
            <person name="Men Y."/>
            <person name="Zeng Y."/>
            <person name="Sun Y."/>
        </authorList>
    </citation>
    <scope>FUNCTION</scope>
    <scope>CATALYTIC ACTIVITY</scope>
</reference>
<reference key="5">
    <citation type="journal article" date="2023" name="Commun. Biol.">
        <title>Heterologous mogrosides biosynthesis in cucumber and tomato by genetic manipulation.</title>
        <authorList>
            <person name="Liao J."/>
            <person name="Liu T."/>
            <person name="Xie L."/>
            <person name="Mo C."/>
            <person name="Qiao J."/>
            <person name="Huang X."/>
            <person name="Cui S."/>
            <person name="Jia X."/>
            <person name="Luo Z."/>
            <person name="Ma X."/>
        </authorList>
    </citation>
    <scope>BIOTECHNOLOGY</scope>
</reference>
<sequence>MWRLKVGAESVGENDEKWLKSISNHLGRQVWEFCPDAGTQQQLLQVHKARKAFHDDRFHRKQSSDLFITIQYGKEVENGGKTAGVKLKEGEEVRKEAVESSLERALSFYSSIQTSDGNWASDLGGPMFLLPGLVIALYVTGVLNSVLSKHHRQEMCRYVYNHQNEDGGWGLHIEGPSTMFGSALNYVALRLLGEDANAGAMPKARAWILDHGGATGITSWGKLWLSVLGVYEWSGNNPLPPEFWLFPYFLPFHPGRMWCHCRMVYLPMSYLYGKRFVGPITPIVLSLRKELYAVPYHEIDWNKSRNTCAKEDLYYPHPKMQDILWGSLHHVYEPLFTRWPAKRLREKALQTAMQHIHYEDENTRYICLGPVNKVLNLLCCWVEDPYSDAFKLHLQRVHDYLWVAEDGMKMQGYNGSQLWDTAFSIQAIVSTKLVDNYGPTLRKAHDFVKSSQIQQDCPGDPNVWYRHIHKGAWPFSTRDHGWLISDCTAEGLKAALMLSKLPSETVGESLERNRLCDAVNVLLSLQNDNGGFASYELTRSYPWLELINPAETFGDIVIDYPYVECTSATMEALTLFKKLHPGHRTKEIDTAIVRAANFLENMQRTDGSWYGCWGVCFTYAGWFGIKGLVAAGRTYNNCLAIRKACDFLLSKELPGGGWGESYLSCQNKVYTNLEGNRPHLVNTAWVLMALIEAGQAERDPTPLHRAARLLINSQLENGDFPQQEIMGVFNKNCMITYAAYRNIFPIWALGEYCHRVLTE</sequence>
<proteinExistence type="evidence at protein level"/>
<name>CUCS_SIRGR</name>
<accession>K7NBZ9</accession>
<evidence type="ECO:0000269" key="1">
    <source>
    </source>
</evidence>
<evidence type="ECO:0000269" key="2">
    <source>
    </source>
</evidence>
<evidence type="ECO:0000269" key="3">
    <source>
    </source>
</evidence>
<evidence type="ECO:0000269" key="4">
    <source>
    </source>
</evidence>
<evidence type="ECO:0000303" key="5">
    <source>
    </source>
</evidence>
<evidence type="ECO:0000303" key="6">
    <source>
    </source>
</evidence>
<evidence type="ECO:0000303" key="7">
    <source>
    </source>
</evidence>
<evidence type="ECO:0000303" key="8">
    <source>
    </source>
</evidence>
<evidence type="ECO:0000305" key="9"/>
<evidence type="ECO:0000305" key="10">
    <source>
    </source>
</evidence>